<protein>
    <recommendedName>
        <fullName evidence="6">Dermonecrotic toxin LspiSicTox-betaIE4i</fullName>
        <ecNumber evidence="4">4.6.1.-</ecNumber>
    </recommendedName>
    <alternativeName>
        <fullName>Phospholipase D</fullName>
        <shortName>PLD</shortName>
    </alternativeName>
    <alternativeName>
        <fullName>Sphingomyelin phosphodiesterase D</fullName>
        <shortName>SMD</shortName>
        <shortName>SMase D</shortName>
        <shortName>Sphingomyelinase D</shortName>
    </alternativeName>
</protein>
<proteinExistence type="evidence at transcript level"/>
<name>B1U1_LOXSN</name>
<evidence type="ECO:0000250" key="1">
    <source>
        <dbReference type="UniProtKB" id="A0A0D4WTV1"/>
    </source>
</evidence>
<evidence type="ECO:0000250" key="2">
    <source>
        <dbReference type="UniProtKB" id="A0A0D4WV12"/>
    </source>
</evidence>
<evidence type="ECO:0000250" key="3">
    <source>
        <dbReference type="UniProtKB" id="P0CE80"/>
    </source>
</evidence>
<evidence type="ECO:0000250" key="4">
    <source>
        <dbReference type="UniProtKB" id="Q4ZFU2"/>
    </source>
</evidence>
<evidence type="ECO:0000250" key="5">
    <source>
        <dbReference type="UniProtKB" id="Q8I914"/>
    </source>
</evidence>
<evidence type="ECO:0000303" key="6">
    <source>
    </source>
</evidence>
<evidence type="ECO:0000305" key="7"/>
<evidence type="ECO:0000305" key="8">
    <source>
    </source>
</evidence>
<comment type="function">
    <text evidence="1 3">Dermonecrotic toxins cleave the phosphodiester linkage between the phosphate and headgroup of certain phospholipids (sphingolipid and lysolipid substrates), forming an alcohol (often choline) and a cyclic phosphate (By similarity). This toxin acts on sphingomyelin (SM) (By similarity). It may also act on ceramide phosphoethanolamine (CPE), lysophosphatidylcholine (LPC) and lysophosphatidylethanolamine (LPE), but not on lysophosphatidylserine (LPS), and lysophosphatidylglycerol (LPG) (By similarity). It acts by transphosphatidylation, releasing exclusively cyclic phosphate products as second products (By similarity). Induces dermonecrosis, hemolysis, increased vascular permeability, edema, inflammatory response, and platelet aggregation (By similarity).</text>
</comment>
<comment type="catalytic activity">
    <reaction evidence="1">
        <text>an N-(acyl)-sphingosylphosphocholine = an N-(acyl)-sphingosyl-1,3-cyclic phosphate + choline</text>
        <dbReference type="Rhea" id="RHEA:60652"/>
        <dbReference type="ChEBI" id="CHEBI:15354"/>
        <dbReference type="ChEBI" id="CHEBI:64583"/>
        <dbReference type="ChEBI" id="CHEBI:143892"/>
    </reaction>
</comment>
<comment type="catalytic activity">
    <reaction evidence="1">
        <text>an N-(acyl)-sphingosylphosphoethanolamine = an N-(acyl)-sphingosyl-1,3-cyclic phosphate + ethanolamine</text>
        <dbReference type="Rhea" id="RHEA:60648"/>
        <dbReference type="ChEBI" id="CHEBI:57603"/>
        <dbReference type="ChEBI" id="CHEBI:143891"/>
        <dbReference type="ChEBI" id="CHEBI:143892"/>
    </reaction>
</comment>
<comment type="catalytic activity">
    <reaction evidence="1">
        <text>a 1-acyl-sn-glycero-3-phosphocholine = a 1-acyl-sn-glycero-2,3-cyclic phosphate + choline</text>
        <dbReference type="Rhea" id="RHEA:60700"/>
        <dbReference type="ChEBI" id="CHEBI:15354"/>
        <dbReference type="ChEBI" id="CHEBI:58168"/>
        <dbReference type="ChEBI" id="CHEBI:143947"/>
    </reaction>
</comment>
<comment type="catalytic activity">
    <reaction evidence="1">
        <text>a 1-acyl-sn-glycero-3-phosphoethanolamine = a 1-acyl-sn-glycero-2,3-cyclic phosphate + ethanolamine</text>
        <dbReference type="Rhea" id="RHEA:60704"/>
        <dbReference type="ChEBI" id="CHEBI:57603"/>
        <dbReference type="ChEBI" id="CHEBI:64381"/>
        <dbReference type="ChEBI" id="CHEBI:143947"/>
    </reaction>
</comment>
<comment type="cofactor">
    <cofactor evidence="5">
        <name>Mg(2+)</name>
        <dbReference type="ChEBI" id="CHEBI:18420"/>
    </cofactor>
    <text evidence="5">Binds 1 Mg(2+) ion per subunit.</text>
</comment>
<comment type="subcellular location">
    <subcellularLocation>
        <location evidence="8">Secreted</location>
    </subcellularLocation>
</comment>
<comment type="tissue specificity">
    <text evidence="8">Expressed by the venom gland.</text>
</comment>
<comment type="similarity">
    <text evidence="7">Belongs to the arthropod phospholipase D family. Class II subfamily.</text>
</comment>
<comment type="caution">
    <text evidence="1 2 4">The most common activity assay for dermonecrotic toxins detects enzymatic activity by monitoring choline release from substrate. Liberation of choline from sphingomyelin (SM) or lysophosphatidylcholine (LPC) is commonly assumed to result from substrate hydrolysis, giving either ceramide-1-phosphate (C1P) or lysophosphatidic acid (LPA), respectively, as a second product. However, two studies from Lajoie and colleagues (2013 and 2015) report the observation of exclusive formation of cyclic phosphate products as second products, resulting from intramolecular transphosphatidylation. Cyclic phosphates have vastly different biological properties from their monoester counterparts, and they may be relevant to the pathology of brown spider envenomation.</text>
</comment>
<dbReference type="EC" id="4.6.1.-" evidence="4"/>
<dbReference type="EMBL" id="FJ171481">
    <property type="protein sequence ID" value="ACN48977.1"/>
    <property type="molecule type" value="mRNA"/>
</dbReference>
<dbReference type="SMR" id="C0JB46"/>
<dbReference type="GO" id="GO:0005576">
    <property type="term" value="C:extracellular region"/>
    <property type="evidence" value="ECO:0007669"/>
    <property type="project" value="UniProtKB-SubCell"/>
</dbReference>
<dbReference type="GO" id="GO:0016829">
    <property type="term" value="F:lyase activity"/>
    <property type="evidence" value="ECO:0007669"/>
    <property type="project" value="UniProtKB-KW"/>
</dbReference>
<dbReference type="GO" id="GO:0046872">
    <property type="term" value="F:metal ion binding"/>
    <property type="evidence" value="ECO:0007669"/>
    <property type="project" value="UniProtKB-KW"/>
</dbReference>
<dbReference type="GO" id="GO:0008081">
    <property type="term" value="F:phosphoric diester hydrolase activity"/>
    <property type="evidence" value="ECO:0007669"/>
    <property type="project" value="InterPro"/>
</dbReference>
<dbReference type="GO" id="GO:0090729">
    <property type="term" value="F:toxin activity"/>
    <property type="evidence" value="ECO:0007669"/>
    <property type="project" value="UniProtKB-KW"/>
</dbReference>
<dbReference type="GO" id="GO:0031640">
    <property type="term" value="P:killing of cells of another organism"/>
    <property type="evidence" value="ECO:0007669"/>
    <property type="project" value="UniProtKB-KW"/>
</dbReference>
<dbReference type="GO" id="GO:0016042">
    <property type="term" value="P:lipid catabolic process"/>
    <property type="evidence" value="ECO:0007669"/>
    <property type="project" value="UniProtKB-KW"/>
</dbReference>
<dbReference type="CDD" id="cd08576">
    <property type="entry name" value="GDPD_like_SMaseD_PLD"/>
    <property type="match status" value="1"/>
</dbReference>
<dbReference type="Gene3D" id="3.20.20.190">
    <property type="entry name" value="Phosphatidylinositol (PI) phosphodiesterase"/>
    <property type="match status" value="1"/>
</dbReference>
<dbReference type="InterPro" id="IPR017946">
    <property type="entry name" value="PLC-like_Pdiesterase_TIM-brl"/>
</dbReference>
<dbReference type="SUPFAM" id="SSF51695">
    <property type="entry name" value="PLC-like phosphodiesterases"/>
    <property type="match status" value="1"/>
</dbReference>
<sequence>EFALMVNDFEILKSYLDEGANGIESDITFSDEGEPEYTFHGVPCDCRRWCDRSVGIGEYLQHLSDLTTPGNPKFRENLLVVVLDLKLNGLSQDALRQGGLRLADKLAAHYWTGNRKARAYFIISVPKTSESEFMRTFRKELDEINFGDMSAKIGFDFTDNGDFKETQKVYEGLGISEHIWASDGITNCIPLLLRGTDRLEDLTRQRDEPGYKYIDKVYAWTYDKETSVVKALELGVDGVMTNYADFVIKVLNKPEHSSKYRLATYDDNPFEKFTA</sequence>
<reference key="1">
    <citation type="journal article" date="2009" name="Mol. Biol. Evol.">
        <title>Molecular evolution, functional variation, and proposed nomenclature of the gene family that includes sphingomyelinase D in sicariid spider venoms.</title>
        <authorList>
            <person name="Binford G.J."/>
            <person name="Bodner M.R."/>
            <person name="Cordes M.H."/>
            <person name="Baldwin K.L."/>
            <person name="Rynerson M.R."/>
            <person name="Burns S.N."/>
            <person name="Zobel-Thropp P.A."/>
        </authorList>
    </citation>
    <scope>NUCLEOTIDE SEQUENCE [MRNA]</scope>
    <scope>NOMENCLATURE</scope>
    <source>
        <strain>Borakalalo</strain>
        <tissue>Venom gland</tissue>
    </source>
</reference>
<feature type="chain" id="PRO_0000392865" description="Dermonecrotic toxin LspiSicTox-betaIE4i">
    <location>
        <begin position="1" status="less than"/>
        <end position="275"/>
    </location>
</feature>
<feature type="active site" description="Nucleophile" evidence="5">
    <location>
        <position position="40"/>
    </location>
</feature>
<feature type="binding site" evidence="5">
    <location>
        <position position="24"/>
    </location>
    <ligand>
        <name>Mg(2+)</name>
        <dbReference type="ChEBI" id="CHEBI:18420"/>
    </ligand>
</feature>
<feature type="binding site" evidence="5">
    <location>
        <position position="26"/>
    </location>
    <ligand>
        <name>Mg(2+)</name>
        <dbReference type="ChEBI" id="CHEBI:18420"/>
    </ligand>
</feature>
<feature type="binding site" evidence="5">
    <location>
        <position position="84"/>
    </location>
    <ligand>
        <name>Mg(2+)</name>
        <dbReference type="ChEBI" id="CHEBI:18420"/>
    </ligand>
</feature>
<feature type="disulfide bond" evidence="3">
    <location>
        <begin position="44"/>
        <end position="50"/>
    </location>
</feature>
<feature type="disulfide bond" evidence="3">
    <location>
        <begin position="46"/>
        <end position="188"/>
    </location>
</feature>
<feature type="non-terminal residue">
    <location>
        <position position="1"/>
    </location>
</feature>
<accession>C0JB46</accession>
<keyword id="KW-0204">Cytolysis</keyword>
<keyword id="KW-1061">Dermonecrotic toxin</keyword>
<keyword id="KW-1015">Disulfide bond</keyword>
<keyword id="KW-0354">Hemolysis</keyword>
<keyword id="KW-0442">Lipid degradation</keyword>
<keyword id="KW-0443">Lipid metabolism</keyword>
<keyword id="KW-0456">Lyase</keyword>
<keyword id="KW-0460">Magnesium</keyword>
<keyword id="KW-0479">Metal-binding</keyword>
<keyword id="KW-0964">Secreted</keyword>
<keyword id="KW-0800">Toxin</keyword>
<organism>
    <name type="scientific">Loxosceles spinulosa</name>
    <name type="common">Recluse spider</name>
    <dbReference type="NCBI Taxonomy" id="571532"/>
    <lineage>
        <taxon>Eukaryota</taxon>
        <taxon>Metazoa</taxon>
        <taxon>Ecdysozoa</taxon>
        <taxon>Arthropoda</taxon>
        <taxon>Chelicerata</taxon>
        <taxon>Arachnida</taxon>
        <taxon>Araneae</taxon>
        <taxon>Araneomorphae</taxon>
        <taxon>Haplogynae</taxon>
        <taxon>Scytodoidea</taxon>
        <taxon>Sicariidae</taxon>
        <taxon>Loxosceles</taxon>
    </lineage>
</organism>